<evidence type="ECO:0000250" key="1"/>
<evidence type="ECO:0000250" key="2">
    <source>
        <dbReference type="UniProtKB" id="P0C1Z0"/>
    </source>
</evidence>
<evidence type="ECO:0000250" key="3">
    <source>
        <dbReference type="UniProtKB" id="P60775"/>
    </source>
</evidence>
<evidence type="ECO:0000255" key="4"/>
<evidence type="ECO:0000305" key="5"/>
<organism>
    <name type="scientific">Hydrophis peronii</name>
    <name type="common">Spiny-headed seasnake</name>
    <name type="synonym">Acalyptophis peronii</name>
    <dbReference type="NCBI Taxonomy" id="8676"/>
    <lineage>
        <taxon>Eukaryota</taxon>
        <taxon>Metazoa</taxon>
        <taxon>Chordata</taxon>
        <taxon>Craniata</taxon>
        <taxon>Vertebrata</taxon>
        <taxon>Euteleostomi</taxon>
        <taxon>Lepidosauria</taxon>
        <taxon>Squamata</taxon>
        <taxon>Bifurcata</taxon>
        <taxon>Unidentata</taxon>
        <taxon>Episquamata</taxon>
        <taxon>Toxicofera</taxon>
        <taxon>Serpentes</taxon>
        <taxon>Colubroidea</taxon>
        <taxon>Elapidae</taxon>
        <taxon>Hydrophiinae</taxon>
        <taxon>Hydrophis</taxon>
    </lineage>
</organism>
<keyword id="KW-0008">Acetylcholine receptor inhibiting toxin</keyword>
<keyword id="KW-1015">Disulfide bond</keyword>
<keyword id="KW-0872">Ion channel impairing toxin</keyword>
<keyword id="KW-0528">Neurotoxin</keyword>
<keyword id="KW-0629">Postsynaptic neurotoxin</keyword>
<keyword id="KW-0964">Secreted</keyword>
<keyword id="KW-0732">Signal</keyword>
<keyword id="KW-0800">Toxin</keyword>
<protein>
    <recommendedName>
        <fullName>Short neurotoxin 2</fullName>
    </recommendedName>
</protein>
<reference key="1">
    <citation type="submission" date="2004-09" db="EMBL/GenBank/DDBJ databases">
        <title>Acalyptophis peronii neurotoxin.</title>
        <authorList>
            <person name="Kini R.M."/>
            <person name="Pahari S."/>
        </authorList>
    </citation>
    <scope>NUCLEOTIDE SEQUENCE [MRNA]</scope>
    <source>
        <tissue>Venom gland</tissue>
    </source>
</reference>
<accession>Q5UFR7</accession>
<name>3S12_HYDPR</name>
<comment type="function">
    <text evidence="3">Binds to muscle nicotinic acetylcholine receptor (nAChR) and inhibit acetylcholine from binding to the receptor, thereby impairing neuromuscular transmission.</text>
</comment>
<comment type="subcellular location">
    <subcellularLocation>
        <location evidence="1">Secreted</location>
    </subcellularLocation>
</comment>
<comment type="tissue specificity">
    <text evidence="5">Expressed by the venom gland.</text>
</comment>
<comment type="similarity">
    <text evidence="5">Belongs to the three-finger toxin family. Short-chain subfamily. Type I alpha-neurotoxin sub-subfamily.</text>
</comment>
<feature type="signal peptide" evidence="4">
    <location>
        <begin position="1"/>
        <end position="21"/>
    </location>
</feature>
<feature type="chain" id="PRO_0000316169" description="Short neurotoxin 2">
    <location>
        <begin position="22"/>
        <end position="81"/>
    </location>
</feature>
<feature type="disulfide bond" evidence="2">
    <location>
        <begin position="24"/>
        <end position="43"/>
    </location>
</feature>
<feature type="disulfide bond" evidence="2">
    <location>
        <begin position="38"/>
        <end position="60"/>
    </location>
</feature>
<feature type="disulfide bond" evidence="2">
    <location>
        <begin position="62"/>
        <end position="73"/>
    </location>
</feature>
<feature type="disulfide bond" evidence="2">
    <location>
        <begin position="74"/>
        <end position="79"/>
    </location>
</feature>
<proteinExistence type="inferred from homology"/>
<dbReference type="EMBL" id="AY742211">
    <property type="protein sequence ID" value="AAV33394.1"/>
    <property type="molecule type" value="mRNA"/>
</dbReference>
<dbReference type="SMR" id="Q5UFR7"/>
<dbReference type="GO" id="GO:0005576">
    <property type="term" value="C:extracellular region"/>
    <property type="evidence" value="ECO:0007669"/>
    <property type="project" value="UniProtKB-SubCell"/>
</dbReference>
<dbReference type="GO" id="GO:0030550">
    <property type="term" value="F:acetylcholine receptor inhibitor activity"/>
    <property type="evidence" value="ECO:0007669"/>
    <property type="project" value="UniProtKB-KW"/>
</dbReference>
<dbReference type="GO" id="GO:0099106">
    <property type="term" value="F:ion channel regulator activity"/>
    <property type="evidence" value="ECO:0007669"/>
    <property type="project" value="UniProtKB-KW"/>
</dbReference>
<dbReference type="GO" id="GO:0090729">
    <property type="term" value="F:toxin activity"/>
    <property type="evidence" value="ECO:0007669"/>
    <property type="project" value="UniProtKB-KW"/>
</dbReference>
<dbReference type="CDD" id="cd00206">
    <property type="entry name" value="TFP_snake_toxin"/>
    <property type="match status" value="1"/>
</dbReference>
<dbReference type="Gene3D" id="2.10.60.10">
    <property type="entry name" value="CD59"/>
    <property type="match status" value="1"/>
</dbReference>
<dbReference type="InterPro" id="IPR003571">
    <property type="entry name" value="Snake_3FTx"/>
</dbReference>
<dbReference type="InterPro" id="IPR045860">
    <property type="entry name" value="Snake_toxin-like_sf"/>
</dbReference>
<dbReference type="InterPro" id="IPR018354">
    <property type="entry name" value="Snake_toxin_con_site"/>
</dbReference>
<dbReference type="InterPro" id="IPR054131">
    <property type="entry name" value="Toxin_cobra-type"/>
</dbReference>
<dbReference type="Pfam" id="PF21947">
    <property type="entry name" value="Toxin_cobra-type"/>
    <property type="match status" value="1"/>
</dbReference>
<dbReference type="SUPFAM" id="SSF57302">
    <property type="entry name" value="Snake toxin-like"/>
    <property type="match status" value="1"/>
</dbReference>
<dbReference type="PROSITE" id="PS00272">
    <property type="entry name" value="SNAKE_TOXIN"/>
    <property type="match status" value="1"/>
</dbReference>
<sequence length="81" mass="8890">MKTLLLTLVVVTIVCLDLGYTMTCCNQQSSQPKTTTNCAGNSCYKKTWSDHRGTIIERGCGCPQVKSGIKLECCHTNECNN</sequence>